<gene>
    <name evidence="1" type="primary">rplC</name>
    <name type="ordered locus">GTNG_0106</name>
</gene>
<comment type="function">
    <text evidence="1">One of the primary rRNA binding proteins, it binds directly near the 3'-end of the 23S rRNA, where it nucleates assembly of the 50S subunit.</text>
</comment>
<comment type="subunit">
    <text evidence="1">Part of the 50S ribosomal subunit. Forms a cluster with proteins L14 and L19.</text>
</comment>
<comment type="similarity">
    <text evidence="1">Belongs to the universal ribosomal protein uL3 family.</text>
</comment>
<name>RL3_GEOTN</name>
<sequence length="211" mass="22953">MTKGILGRKIGMTQVFAENGDLIPVTVIEATPNVVLQKKTIENDGYEAIQLGFEDLSTKRANKPQIGHAAKANTAPKRFIREIRGANVNEYEVGQEVKVDIFSEGDIVDVTGISKGKGFQGVIKRHGQSRGPMAHGSRYHRRPGSMGAIAPNRVFKTKNLPGRMGGERVTIQNLKIVKVDPERNLLLIKGNVPGPRKGLVIVKSAVKAKAK</sequence>
<feature type="chain" id="PRO_1000052055" description="Large ribosomal subunit protein uL3">
    <location>
        <begin position="1"/>
        <end position="211"/>
    </location>
</feature>
<feature type="region of interest" description="Disordered" evidence="2">
    <location>
        <begin position="126"/>
        <end position="147"/>
    </location>
</feature>
<reference key="1">
    <citation type="journal article" date="2007" name="Proc. Natl. Acad. Sci. U.S.A.">
        <title>Genome and proteome of long-chain alkane degrading Geobacillus thermodenitrificans NG80-2 isolated from a deep-subsurface oil reservoir.</title>
        <authorList>
            <person name="Feng L."/>
            <person name="Wang W."/>
            <person name="Cheng J."/>
            <person name="Ren Y."/>
            <person name="Zhao G."/>
            <person name="Gao C."/>
            <person name="Tang Y."/>
            <person name="Liu X."/>
            <person name="Han W."/>
            <person name="Peng X."/>
            <person name="Liu R."/>
            <person name="Wang L."/>
        </authorList>
    </citation>
    <scope>NUCLEOTIDE SEQUENCE [LARGE SCALE GENOMIC DNA]</scope>
    <source>
        <strain>NG80-2</strain>
    </source>
</reference>
<organism>
    <name type="scientific">Geobacillus thermodenitrificans (strain NG80-2)</name>
    <dbReference type="NCBI Taxonomy" id="420246"/>
    <lineage>
        <taxon>Bacteria</taxon>
        <taxon>Bacillati</taxon>
        <taxon>Bacillota</taxon>
        <taxon>Bacilli</taxon>
        <taxon>Bacillales</taxon>
        <taxon>Anoxybacillaceae</taxon>
        <taxon>Geobacillus</taxon>
    </lineage>
</organism>
<dbReference type="EMBL" id="CP000557">
    <property type="protein sequence ID" value="ABO65493.1"/>
    <property type="molecule type" value="Genomic_DNA"/>
</dbReference>
<dbReference type="RefSeq" id="WP_008881944.1">
    <property type="nucleotide sequence ID" value="NC_009328.1"/>
</dbReference>
<dbReference type="SMR" id="A4IJI9"/>
<dbReference type="GeneID" id="87622326"/>
<dbReference type="KEGG" id="gtn:GTNG_0106"/>
<dbReference type="eggNOG" id="COG0087">
    <property type="taxonomic scope" value="Bacteria"/>
</dbReference>
<dbReference type="HOGENOM" id="CLU_044142_4_1_9"/>
<dbReference type="Proteomes" id="UP000001578">
    <property type="component" value="Chromosome"/>
</dbReference>
<dbReference type="GO" id="GO:0022625">
    <property type="term" value="C:cytosolic large ribosomal subunit"/>
    <property type="evidence" value="ECO:0007669"/>
    <property type="project" value="TreeGrafter"/>
</dbReference>
<dbReference type="GO" id="GO:0019843">
    <property type="term" value="F:rRNA binding"/>
    <property type="evidence" value="ECO:0007669"/>
    <property type="project" value="UniProtKB-UniRule"/>
</dbReference>
<dbReference type="GO" id="GO:0003735">
    <property type="term" value="F:structural constituent of ribosome"/>
    <property type="evidence" value="ECO:0007669"/>
    <property type="project" value="InterPro"/>
</dbReference>
<dbReference type="GO" id="GO:0006412">
    <property type="term" value="P:translation"/>
    <property type="evidence" value="ECO:0007669"/>
    <property type="project" value="UniProtKB-UniRule"/>
</dbReference>
<dbReference type="FunFam" id="2.40.30.10:FF:000004">
    <property type="entry name" value="50S ribosomal protein L3"/>
    <property type="match status" value="1"/>
</dbReference>
<dbReference type="FunFam" id="3.30.160.810:FF:000002">
    <property type="entry name" value="50S ribosomal protein L3"/>
    <property type="match status" value="1"/>
</dbReference>
<dbReference type="Gene3D" id="3.30.160.810">
    <property type="match status" value="1"/>
</dbReference>
<dbReference type="Gene3D" id="2.40.30.10">
    <property type="entry name" value="Translation factors"/>
    <property type="match status" value="1"/>
</dbReference>
<dbReference type="HAMAP" id="MF_01325_B">
    <property type="entry name" value="Ribosomal_uL3_B"/>
    <property type="match status" value="1"/>
</dbReference>
<dbReference type="InterPro" id="IPR000597">
    <property type="entry name" value="Ribosomal_uL3"/>
</dbReference>
<dbReference type="InterPro" id="IPR019927">
    <property type="entry name" value="Ribosomal_uL3_bac/org-type"/>
</dbReference>
<dbReference type="InterPro" id="IPR019926">
    <property type="entry name" value="Ribosomal_uL3_CS"/>
</dbReference>
<dbReference type="InterPro" id="IPR009000">
    <property type="entry name" value="Transl_B-barrel_sf"/>
</dbReference>
<dbReference type="NCBIfam" id="TIGR03625">
    <property type="entry name" value="L3_bact"/>
    <property type="match status" value="1"/>
</dbReference>
<dbReference type="PANTHER" id="PTHR11229">
    <property type="entry name" value="50S RIBOSOMAL PROTEIN L3"/>
    <property type="match status" value="1"/>
</dbReference>
<dbReference type="PANTHER" id="PTHR11229:SF16">
    <property type="entry name" value="LARGE RIBOSOMAL SUBUNIT PROTEIN UL3C"/>
    <property type="match status" value="1"/>
</dbReference>
<dbReference type="Pfam" id="PF00297">
    <property type="entry name" value="Ribosomal_L3"/>
    <property type="match status" value="1"/>
</dbReference>
<dbReference type="SUPFAM" id="SSF50447">
    <property type="entry name" value="Translation proteins"/>
    <property type="match status" value="1"/>
</dbReference>
<dbReference type="PROSITE" id="PS00474">
    <property type="entry name" value="RIBOSOMAL_L3"/>
    <property type="match status" value="1"/>
</dbReference>
<proteinExistence type="inferred from homology"/>
<keyword id="KW-0687">Ribonucleoprotein</keyword>
<keyword id="KW-0689">Ribosomal protein</keyword>
<keyword id="KW-0694">RNA-binding</keyword>
<keyword id="KW-0699">rRNA-binding</keyword>
<protein>
    <recommendedName>
        <fullName evidence="1">Large ribosomal subunit protein uL3</fullName>
    </recommendedName>
    <alternativeName>
        <fullName evidence="3">50S ribosomal protein L3</fullName>
    </alternativeName>
</protein>
<evidence type="ECO:0000255" key="1">
    <source>
        <dbReference type="HAMAP-Rule" id="MF_01325"/>
    </source>
</evidence>
<evidence type="ECO:0000256" key="2">
    <source>
        <dbReference type="SAM" id="MobiDB-lite"/>
    </source>
</evidence>
<evidence type="ECO:0000305" key="3"/>
<accession>A4IJI9</accession>